<name>ARCA_ECO81</name>
<evidence type="ECO:0000255" key="1">
    <source>
        <dbReference type="HAMAP-Rule" id="MF_00242"/>
    </source>
</evidence>
<dbReference type="EC" id="3.5.3.6" evidence="1"/>
<dbReference type="EMBL" id="CU928162">
    <property type="protein sequence ID" value="CAR11060.1"/>
    <property type="molecule type" value="Genomic_DNA"/>
</dbReference>
<dbReference type="SMR" id="B7MSY5"/>
<dbReference type="KEGG" id="ecq:ECED1_5105"/>
<dbReference type="HOGENOM" id="CLU_052662_0_0_6"/>
<dbReference type="UniPathway" id="UPA00254">
    <property type="reaction ID" value="UER00364"/>
</dbReference>
<dbReference type="Proteomes" id="UP000000748">
    <property type="component" value="Chromosome"/>
</dbReference>
<dbReference type="GO" id="GO:0005737">
    <property type="term" value="C:cytoplasm"/>
    <property type="evidence" value="ECO:0007669"/>
    <property type="project" value="UniProtKB-SubCell"/>
</dbReference>
<dbReference type="GO" id="GO:0016990">
    <property type="term" value="F:arginine deiminase activity"/>
    <property type="evidence" value="ECO:0007669"/>
    <property type="project" value="UniProtKB-UniRule"/>
</dbReference>
<dbReference type="GO" id="GO:0019547">
    <property type="term" value="P:arginine catabolic process to ornithine"/>
    <property type="evidence" value="ECO:0007669"/>
    <property type="project" value="UniProtKB-UniRule"/>
</dbReference>
<dbReference type="GO" id="GO:0019546">
    <property type="term" value="P:arginine deiminase pathway"/>
    <property type="evidence" value="ECO:0007669"/>
    <property type="project" value="TreeGrafter"/>
</dbReference>
<dbReference type="FunFam" id="1.10.3930.10:FF:000002">
    <property type="entry name" value="Arginine deiminase"/>
    <property type="match status" value="1"/>
</dbReference>
<dbReference type="Gene3D" id="1.10.3930.10">
    <property type="entry name" value="Arginine deiminase"/>
    <property type="match status" value="1"/>
</dbReference>
<dbReference type="Gene3D" id="3.75.10.10">
    <property type="entry name" value="L-arginine/glycine Amidinotransferase, Chain A"/>
    <property type="match status" value="1"/>
</dbReference>
<dbReference type="HAMAP" id="MF_00242">
    <property type="entry name" value="Arg_deiminase"/>
    <property type="match status" value="1"/>
</dbReference>
<dbReference type="InterPro" id="IPR003876">
    <property type="entry name" value="Arg_deiminase"/>
</dbReference>
<dbReference type="NCBIfam" id="TIGR01078">
    <property type="entry name" value="arcA"/>
    <property type="match status" value="1"/>
</dbReference>
<dbReference type="NCBIfam" id="NF002381">
    <property type="entry name" value="PRK01388.1"/>
    <property type="match status" value="1"/>
</dbReference>
<dbReference type="PANTHER" id="PTHR47271">
    <property type="entry name" value="ARGININE DEIMINASE"/>
    <property type="match status" value="1"/>
</dbReference>
<dbReference type="PANTHER" id="PTHR47271:SF2">
    <property type="entry name" value="ARGININE DEIMINASE"/>
    <property type="match status" value="1"/>
</dbReference>
<dbReference type="Pfam" id="PF02274">
    <property type="entry name" value="ADI"/>
    <property type="match status" value="1"/>
</dbReference>
<dbReference type="PIRSF" id="PIRSF006356">
    <property type="entry name" value="Arg_deiminase"/>
    <property type="match status" value="1"/>
</dbReference>
<dbReference type="PRINTS" id="PR01466">
    <property type="entry name" value="ARGDEIMINASE"/>
</dbReference>
<dbReference type="SUPFAM" id="SSF55909">
    <property type="entry name" value="Pentein"/>
    <property type="match status" value="1"/>
</dbReference>
<organism>
    <name type="scientific">Escherichia coli O81 (strain ED1a)</name>
    <dbReference type="NCBI Taxonomy" id="585397"/>
    <lineage>
        <taxon>Bacteria</taxon>
        <taxon>Pseudomonadati</taxon>
        <taxon>Pseudomonadota</taxon>
        <taxon>Gammaproteobacteria</taxon>
        <taxon>Enterobacterales</taxon>
        <taxon>Enterobacteriaceae</taxon>
        <taxon>Escherichia</taxon>
    </lineage>
</organism>
<comment type="catalytic activity">
    <reaction evidence="1">
        <text>L-arginine + H2O = L-citrulline + NH4(+)</text>
        <dbReference type="Rhea" id="RHEA:19597"/>
        <dbReference type="ChEBI" id="CHEBI:15377"/>
        <dbReference type="ChEBI" id="CHEBI:28938"/>
        <dbReference type="ChEBI" id="CHEBI:32682"/>
        <dbReference type="ChEBI" id="CHEBI:57743"/>
        <dbReference type="EC" id="3.5.3.6"/>
    </reaction>
</comment>
<comment type="pathway">
    <text evidence="1">Amino-acid degradation; L-arginine degradation via ADI pathway; carbamoyl phosphate from L-arginine: step 1/2.</text>
</comment>
<comment type="subcellular location">
    <subcellularLocation>
        <location evidence="1">Cytoplasm</location>
    </subcellularLocation>
</comment>
<comment type="similarity">
    <text evidence="1">Belongs to the arginine deiminase family.</text>
</comment>
<gene>
    <name evidence="1" type="primary">arcA</name>
    <name type="ordered locus">ECED1_5105</name>
</gene>
<sequence>MMEKHYVGSEIGQLRSVMLHRPNLSLKRLTPSNCQELLFDDVLSVERAGEEHDIFANTLRQQGIEVLLLTDLLTQTLDIPEAKSWLLETQISDYRLGPTFATDVRTWLAEMSHRDLARHLSGGLTYSEIPASIKNMVVDTHDINDFIMKPLPNHLFTRDTSCWIYNGVSINPMAKPARQRETNNLRAIYRWHPQFAGGEFIKYFGDENINYDHATLEGGDVLVIGRGAVLIGMSERTTPQGVEFLAQALFKHRQAERVIAVELPKHRSCMHLDTVMTHIDIDTFSVYPEVVRPDVNCWTLTPDGHGGLKRTQESTLLHAIEKALGIDQVRLITTGGDAFEAEREQWNDANNVLTLRPGVVVGYERNIWTNEKYDKAGITVLPIPGDELGRGRGGARCMSCPLHRDGI</sequence>
<proteinExistence type="inferred from homology"/>
<feature type="chain" id="PRO_1000119037" description="Arginine deiminase">
    <location>
        <begin position="1"/>
        <end position="407"/>
    </location>
</feature>
<feature type="active site" description="Amidino-cysteine intermediate" evidence="1">
    <location>
        <position position="397"/>
    </location>
</feature>
<accession>B7MSY5</accession>
<keyword id="KW-0056">Arginine metabolism</keyword>
<keyword id="KW-0963">Cytoplasm</keyword>
<keyword id="KW-0378">Hydrolase</keyword>
<reference key="1">
    <citation type="journal article" date="2009" name="PLoS Genet.">
        <title>Organised genome dynamics in the Escherichia coli species results in highly diverse adaptive paths.</title>
        <authorList>
            <person name="Touchon M."/>
            <person name="Hoede C."/>
            <person name="Tenaillon O."/>
            <person name="Barbe V."/>
            <person name="Baeriswyl S."/>
            <person name="Bidet P."/>
            <person name="Bingen E."/>
            <person name="Bonacorsi S."/>
            <person name="Bouchier C."/>
            <person name="Bouvet O."/>
            <person name="Calteau A."/>
            <person name="Chiapello H."/>
            <person name="Clermont O."/>
            <person name="Cruveiller S."/>
            <person name="Danchin A."/>
            <person name="Diard M."/>
            <person name="Dossat C."/>
            <person name="Karoui M.E."/>
            <person name="Frapy E."/>
            <person name="Garry L."/>
            <person name="Ghigo J.M."/>
            <person name="Gilles A.M."/>
            <person name="Johnson J."/>
            <person name="Le Bouguenec C."/>
            <person name="Lescat M."/>
            <person name="Mangenot S."/>
            <person name="Martinez-Jehanne V."/>
            <person name="Matic I."/>
            <person name="Nassif X."/>
            <person name="Oztas S."/>
            <person name="Petit M.A."/>
            <person name="Pichon C."/>
            <person name="Rouy Z."/>
            <person name="Ruf C.S."/>
            <person name="Schneider D."/>
            <person name="Tourret J."/>
            <person name="Vacherie B."/>
            <person name="Vallenet D."/>
            <person name="Medigue C."/>
            <person name="Rocha E.P.C."/>
            <person name="Denamur E."/>
        </authorList>
    </citation>
    <scope>NUCLEOTIDE SEQUENCE [LARGE SCALE GENOMIC DNA]</scope>
    <source>
        <strain>ED1a</strain>
    </source>
</reference>
<protein>
    <recommendedName>
        <fullName evidence="1">Arginine deiminase</fullName>
        <shortName evidence="1">ADI</shortName>
        <ecNumber evidence="1">3.5.3.6</ecNumber>
    </recommendedName>
    <alternativeName>
        <fullName evidence="1">Arginine dihydrolase</fullName>
        <shortName evidence="1">AD</shortName>
    </alternativeName>
</protein>